<feature type="chain" id="PRO_0000195744" description="Adenylate cyclase 1">
    <location>
        <begin position="1"/>
        <end position="665"/>
    </location>
</feature>
<feature type="transmembrane region" description="Helical" evidence="2">
    <location>
        <begin position="33"/>
        <end position="53"/>
    </location>
</feature>
<feature type="transmembrane region" description="Helical" evidence="2">
    <location>
        <begin position="373"/>
        <end position="393"/>
    </location>
</feature>
<feature type="domain" description="HAMP" evidence="4">
    <location>
        <begin position="394"/>
        <end position="444"/>
    </location>
</feature>
<feature type="domain" description="Guanylate cyclase" evidence="3">
    <location>
        <begin position="471"/>
        <end position="603"/>
    </location>
</feature>
<feature type="region of interest" description="Disordered" evidence="5">
    <location>
        <begin position="1"/>
        <end position="25"/>
    </location>
</feature>
<feature type="compositionally biased region" description="Basic and acidic residues" evidence="5">
    <location>
        <begin position="7"/>
        <end position="24"/>
    </location>
</feature>
<feature type="binding site" evidence="1">
    <location>
        <position position="476"/>
    </location>
    <ligand>
        <name>Mg(2+)</name>
        <dbReference type="ChEBI" id="CHEBI:18420"/>
    </ligand>
</feature>
<feature type="binding site" evidence="1">
    <location>
        <position position="520"/>
    </location>
    <ligand>
        <name>Mg(2+)</name>
        <dbReference type="ChEBI" id="CHEBI:18420"/>
    </ligand>
</feature>
<evidence type="ECO:0000250" key="1"/>
<evidence type="ECO:0000255" key="2"/>
<evidence type="ECO:0000255" key="3">
    <source>
        <dbReference type="PROSITE-ProRule" id="PRU00099"/>
    </source>
</evidence>
<evidence type="ECO:0000255" key="4">
    <source>
        <dbReference type="PROSITE-ProRule" id="PRU00102"/>
    </source>
</evidence>
<evidence type="ECO:0000256" key="5">
    <source>
        <dbReference type="SAM" id="MobiDB-lite"/>
    </source>
</evidence>
<evidence type="ECO:0000305" key="6"/>
<gene>
    <name type="primary">cya1</name>
    <name type="synonym">cyaA</name>
    <name type="ordered locus">R00259</name>
    <name type="ORF">SMc00339</name>
</gene>
<sequence>MLQRSESGFKDIESMQDSNADKPSRTWTSSLRSLLGLVMVAMLIVVSATLVGLDYRRARSAAIAGAEDNMDAFVGRLVDRLGALSGDTSALVSLVASVANSFLVPPPERMNDKVAVLREGIARSPHIDGVYVGYPSGAFFHVVDLDSAAWRMALDAPRGAAIAVRSMERNDQGKPFDRILFLDASGLQFAERHAASNGFDPRTRPWYRAAVNGKAPVAIGPYEMATTGNLGMTISQAHRGNPQIVIGADVVLDTITDFLSRERLTDDSVSFVLDAVGRPIIHSDSTMMRRIMASKGRDRPVATPQEDGLIESIRRNPPPAGKATLVEVGNRTYLVTVAPLESALLLSGHRVVVAAPLDELLAAANETLVQGLAVSGAVVVVAVLLALVLAHLITKSLNQLTDSANRLQDLDFATPIDVSSHVAEISTLNGAMNRARDAIFTFALYVPKELVRKGIESGHFGGRAAWRQEVTAMFTDIYDFTTISEGRSPEEVVAMLSEYFDLFSEVVAAHDGTIIQFHGDSVFAMWNAPVADTRHAEHACRCALAVEERLEAFNSAQRASGLPEFRTRFGIHTGTAVVGSVGAKERLQYTAMGDTVNVASRLEGMNKDYGTSVLASGAVVAQCKDMVKFRPLGTAKAKGRSTALDIYEVVGVVRAVNTTEAGTAA</sequence>
<accession>P19485</accession>
<keyword id="KW-0067">ATP-binding</keyword>
<keyword id="KW-0115">cAMP biosynthesis</keyword>
<keyword id="KW-1003">Cell membrane</keyword>
<keyword id="KW-0456">Lyase</keyword>
<keyword id="KW-0460">Magnesium</keyword>
<keyword id="KW-0472">Membrane</keyword>
<keyword id="KW-0479">Metal-binding</keyword>
<keyword id="KW-0547">Nucleotide-binding</keyword>
<keyword id="KW-1185">Reference proteome</keyword>
<keyword id="KW-0812">Transmembrane</keyword>
<keyword id="KW-1133">Transmembrane helix</keyword>
<organism>
    <name type="scientific">Rhizobium meliloti (strain 1021)</name>
    <name type="common">Ensifer meliloti</name>
    <name type="synonym">Sinorhizobium meliloti</name>
    <dbReference type="NCBI Taxonomy" id="266834"/>
    <lineage>
        <taxon>Bacteria</taxon>
        <taxon>Pseudomonadati</taxon>
        <taxon>Pseudomonadota</taxon>
        <taxon>Alphaproteobacteria</taxon>
        <taxon>Hyphomicrobiales</taxon>
        <taxon>Rhizobiaceae</taxon>
        <taxon>Sinorhizobium/Ensifer group</taxon>
        <taxon>Sinorhizobium</taxon>
    </lineage>
</organism>
<protein>
    <recommendedName>
        <fullName>Adenylate cyclase 1</fullName>
        <ecNumber>4.6.1.1</ecNumber>
    </recommendedName>
    <alternativeName>
        <fullName>ATP pyrophosphate-lyase 1</fullName>
    </alternativeName>
    <alternativeName>
        <fullName>Adenylyl cyclase 1</fullName>
    </alternativeName>
</protein>
<proteinExistence type="inferred from homology"/>
<comment type="function">
    <text>Plays essential roles in regulation of cellular metabolism by catalyzing the synthesis of a second messenger, cAMP.</text>
</comment>
<comment type="catalytic activity">
    <reaction>
        <text>ATP = 3',5'-cyclic AMP + diphosphate</text>
        <dbReference type="Rhea" id="RHEA:15389"/>
        <dbReference type="ChEBI" id="CHEBI:30616"/>
        <dbReference type="ChEBI" id="CHEBI:33019"/>
        <dbReference type="ChEBI" id="CHEBI:58165"/>
        <dbReference type="EC" id="4.6.1.1"/>
    </reaction>
</comment>
<comment type="cofactor">
    <cofactor evidence="1">
        <name>Mg(2+)</name>
        <dbReference type="ChEBI" id="CHEBI:18420"/>
    </cofactor>
    <text evidence="1">Binds 1 Mg(2+) ion per subunit.</text>
</comment>
<comment type="subcellular location">
    <subcellularLocation>
        <location evidence="6">Cell membrane</location>
        <topology evidence="6">Multi-pass membrane protein</topology>
    </subcellularLocation>
</comment>
<comment type="similarity">
    <text evidence="6">Belongs to the adenylyl cyclase class-3 family.</text>
</comment>
<name>CYA1_RHIME</name>
<reference key="1">
    <citation type="journal article" date="2001" name="Proc. Natl. Acad. Sci. U.S.A.">
        <title>Analysis of the chromosome sequence of the legume symbiont Sinorhizobium meliloti strain 1021.</title>
        <authorList>
            <person name="Capela D."/>
            <person name="Barloy-Hubler F."/>
            <person name="Gouzy J."/>
            <person name="Bothe G."/>
            <person name="Ampe F."/>
            <person name="Batut J."/>
            <person name="Boistard P."/>
            <person name="Becker A."/>
            <person name="Boutry M."/>
            <person name="Cadieu E."/>
            <person name="Dreano S."/>
            <person name="Gloux S."/>
            <person name="Godrie T."/>
            <person name="Goffeau A."/>
            <person name="Kahn D."/>
            <person name="Kiss E."/>
            <person name="Lelaure V."/>
            <person name="Masuy D."/>
            <person name="Pohl T."/>
            <person name="Portetelle D."/>
            <person name="Puehler A."/>
            <person name="Purnelle B."/>
            <person name="Ramsperger U."/>
            <person name="Renard C."/>
            <person name="Thebault P."/>
            <person name="Vandenbol M."/>
            <person name="Weidner S."/>
            <person name="Galibert F."/>
        </authorList>
    </citation>
    <scope>NUCLEOTIDE SEQUENCE [LARGE SCALE GENOMIC DNA]</scope>
    <source>
        <strain>1021</strain>
    </source>
</reference>
<reference key="2">
    <citation type="journal article" date="2001" name="Science">
        <title>The composite genome of the legume symbiont Sinorhizobium meliloti.</title>
        <authorList>
            <person name="Galibert F."/>
            <person name="Finan T.M."/>
            <person name="Long S.R."/>
            <person name="Puehler A."/>
            <person name="Abola P."/>
            <person name="Ampe F."/>
            <person name="Barloy-Hubler F."/>
            <person name="Barnett M.J."/>
            <person name="Becker A."/>
            <person name="Boistard P."/>
            <person name="Bothe G."/>
            <person name="Boutry M."/>
            <person name="Bowser L."/>
            <person name="Buhrmester J."/>
            <person name="Cadieu E."/>
            <person name="Capela D."/>
            <person name="Chain P."/>
            <person name="Cowie A."/>
            <person name="Davis R.W."/>
            <person name="Dreano S."/>
            <person name="Federspiel N.A."/>
            <person name="Fisher R.F."/>
            <person name="Gloux S."/>
            <person name="Godrie T."/>
            <person name="Goffeau A."/>
            <person name="Golding B."/>
            <person name="Gouzy J."/>
            <person name="Gurjal M."/>
            <person name="Hernandez-Lucas I."/>
            <person name="Hong A."/>
            <person name="Huizar L."/>
            <person name="Hyman R.W."/>
            <person name="Jones T."/>
            <person name="Kahn D."/>
            <person name="Kahn M.L."/>
            <person name="Kalman S."/>
            <person name="Keating D.H."/>
            <person name="Kiss E."/>
            <person name="Komp C."/>
            <person name="Lelaure V."/>
            <person name="Masuy D."/>
            <person name="Palm C."/>
            <person name="Peck M.C."/>
            <person name="Pohl T.M."/>
            <person name="Portetelle D."/>
            <person name="Purnelle B."/>
            <person name="Ramsperger U."/>
            <person name="Surzycki R."/>
            <person name="Thebault P."/>
            <person name="Vandenbol M."/>
            <person name="Vorhoelter F.J."/>
            <person name="Weidner S."/>
            <person name="Wells D.H."/>
            <person name="Wong K."/>
            <person name="Yeh K.-C."/>
            <person name="Batut J."/>
        </authorList>
    </citation>
    <scope>NUCLEOTIDE SEQUENCE [LARGE SCALE GENOMIC DNA]</scope>
    <source>
        <strain>1021</strain>
    </source>
</reference>
<reference key="3">
    <citation type="journal article" date="1990" name="J. Bacteriol.">
        <title>Rhizobium meliloti adenylate cyclase is related to eucaryotic adenylate and guanylate cyclases.</title>
        <authorList>
            <person name="Beuve A."/>
            <person name="Boesten B."/>
            <person name="Crasnier M."/>
            <person name="Danchin A."/>
            <person name="O'Gara F."/>
        </authorList>
    </citation>
    <scope>NUCLEOTIDE SEQUENCE [GENOMIC DNA] OF 473-665</scope>
</reference>
<dbReference type="EC" id="4.6.1.1"/>
<dbReference type="EMBL" id="AL591688">
    <property type="protein sequence ID" value="CAC41696.1"/>
    <property type="molecule type" value="Genomic_DNA"/>
</dbReference>
<dbReference type="EMBL" id="M35096">
    <property type="protein sequence ID" value="AAA26247.1"/>
    <property type="molecule type" value="Genomic_DNA"/>
</dbReference>
<dbReference type="PIR" id="A35266">
    <property type="entry name" value="A35266"/>
</dbReference>
<dbReference type="PIR" id="B35266">
    <property type="entry name" value="B35266"/>
</dbReference>
<dbReference type="RefSeq" id="NP_384365.1">
    <property type="nucleotide sequence ID" value="NC_003047.1"/>
</dbReference>
<dbReference type="RefSeq" id="WP_010968455.1">
    <property type="nucleotide sequence ID" value="NC_003047.1"/>
</dbReference>
<dbReference type="SMR" id="P19485"/>
<dbReference type="EnsemblBacteria" id="CAC41696">
    <property type="protein sequence ID" value="CAC41696"/>
    <property type="gene ID" value="SMc00339"/>
</dbReference>
<dbReference type="GeneID" id="89574587"/>
<dbReference type="KEGG" id="sme:SMc00339"/>
<dbReference type="PATRIC" id="fig|266834.11.peg.1626"/>
<dbReference type="eggNOG" id="COG2114">
    <property type="taxonomic scope" value="Bacteria"/>
</dbReference>
<dbReference type="HOGENOM" id="CLU_021956_0_0_5"/>
<dbReference type="OrthoDB" id="9789782at2"/>
<dbReference type="Proteomes" id="UP000001976">
    <property type="component" value="Chromosome"/>
</dbReference>
<dbReference type="GO" id="GO:0005886">
    <property type="term" value="C:plasma membrane"/>
    <property type="evidence" value="ECO:0007669"/>
    <property type="project" value="UniProtKB-SubCell"/>
</dbReference>
<dbReference type="GO" id="GO:0004016">
    <property type="term" value="F:adenylate cyclase activity"/>
    <property type="evidence" value="ECO:0007669"/>
    <property type="project" value="UniProtKB-EC"/>
</dbReference>
<dbReference type="GO" id="GO:0005524">
    <property type="term" value="F:ATP binding"/>
    <property type="evidence" value="ECO:0007669"/>
    <property type="project" value="UniProtKB-KW"/>
</dbReference>
<dbReference type="GO" id="GO:0046872">
    <property type="term" value="F:metal ion binding"/>
    <property type="evidence" value="ECO:0007669"/>
    <property type="project" value="UniProtKB-KW"/>
</dbReference>
<dbReference type="GO" id="GO:0006171">
    <property type="term" value="P:cAMP biosynthetic process"/>
    <property type="evidence" value="ECO:0007669"/>
    <property type="project" value="UniProtKB-KW"/>
</dbReference>
<dbReference type="GO" id="GO:0035556">
    <property type="term" value="P:intracellular signal transduction"/>
    <property type="evidence" value="ECO:0007669"/>
    <property type="project" value="InterPro"/>
</dbReference>
<dbReference type="CDD" id="cd07302">
    <property type="entry name" value="CHD"/>
    <property type="match status" value="1"/>
</dbReference>
<dbReference type="Gene3D" id="6.10.340.10">
    <property type="match status" value="1"/>
</dbReference>
<dbReference type="Gene3D" id="3.30.70.1230">
    <property type="entry name" value="Nucleotide cyclase"/>
    <property type="match status" value="1"/>
</dbReference>
<dbReference type="Gene3D" id="3.30.450.20">
    <property type="entry name" value="PAS domain"/>
    <property type="match status" value="1"/>
</dbReference>
<dbReference type="InterPro" id="IPR001054">
    <property type="entry name" value="A/G_cyclase"/>
</dbReference>
<dbReference type="InterPro" id="IPR050697">
    <property type="entry name" value="Adenylyl/Guanylyl_Cyclase_3/4"/>
</dbReference>
<dbReference type="InterPro" id="IPR033479">
    <property type="entry name" value="dCache_1"/>
</dbReference>
<dbReference type="InterPro" id="IPR003660">
    <property type="entry name" value="HAMP_dom"/>
</dbReference>
<dbReference type="InterPro" id="IPR029787">
    <property type="entry name" value="Nucleotide_cyclase"/>
</dbReference>
<dbReference type="InterPro" id="IPR029151">
    <property type="entry name" value="Sensor-like_sf"/>
</dbReference>
<dbReference type="PANTHER" id="PTHR43081:SF1">
    <property type="entry name" value="ADENYLATE CYCLASE, TERMINAL-DIFFERENTIATION SPECIFIC"/>
    <property type="match status" value="1"/>
</dbReference>
<dbReference type="PANTHER" id="PTHR43081">
    <property type="entry name" value="ADENYLATE CYCLASE, TERMINAL-DIFFERENTIATION SPECIFIC-RELATED"/>
    <property type="match status" value="1"/>
</dbReference>
<dbReference type="Pfam" id="PF02743">
    <property type="entry name" value="dCache_1"/>
    <property type="match status" value="1"/>
</dbReference>
<dbReference type="Pfam" id="PF00211">
    <property type="entry name" value="Guanylate_cyc"/>
    <property type="match status" value="1"/>
</dbReference>
<dbReference type="Pfam" id="PF00672">
    <property type="entry name" value="HAMP"/>
    <property type="match status" value="1"/>
</dbReference>
<dbReference type="SMART" id="SM00044">
    <property type="entry name" value="CYCc"/>
    <property type="match status" value="1"/>
</dbReference>
<dbReference type="SMART" id="SM00304">
    <property type="entry name" value="HAMP"/>
    <property type="match status" value="1"/>
</dbReference>
<dbReference type="SUPFAM" id="SSF55073">
    <property type="entry name" value="Nucleotide cyclase"/>
    <property type="match status" value="1"/>
</dbReference>
<dbReference type="SUPFAM" id="SSF103190">
    <property type="entry name" value="Sensory domain-like"/>
    <property type="match status" value="1"/>
</dbReference>
<dbReference type="PROSITE" id="PS50125">
    <property type="entry name" value="GUANYLATE_CYCLASE_2"/>
    <property type="match status" value="1"/>
</dbReference>
<dbReference type="PROSITE" id="PS50885">
    <property type="entry name" value="HAMP"/>
    <property type="match status" value="1"/>
</dbReference>